<reference key="1">
    <citation type="submission" date="2007-11" db="EMBL/GenBank/DDBJ databases">
        <title>Complete genome sequence of Clostridium phytofermentans ISDg.</title>
        <authorList>
            <person name="Leschine S.B."/>
            <person name="Warnick T.A."/>
            <person name="Blanchard J.L."/>
            <person name="Schnell D.J."/>
            <person name="Petit E.L."/>
            <person name="LaTouf W.G."/>
            <person name="Copeland A."/>
            <person name="Lucas S."/>
            <person name="Lapidus A."/>
            <person name="Barry K."/>
            <person name="Glavina del Rio T."/>
            <person name="Dalin E."/>
            <person name="Tice H."/>
            <person name="Pitluck S."/>
            <person name="Kiss H."/>
            <person name="Brettin T."/>
            <person name="Bruce D."/>
            <person name="Detter J.C."/>
            <person name="Han C."/>
            <person name="Kuske C."/>
            <person name="Schmutz J."/>
            <person name="Larimer F."/>
            <person name="Land M."/>
            <person name="Hauser L."/>
            <person name="Kyrpides N."/>
            <person name="Kim E.A."/>
            <person name="Richardson P."/>
        </authorList>
    </citation>
    <scope>NUCLEOTIDE SEQUENCE [LARGE SCALE GENOMIC DNA]</scope>
    <source>
        <strain>ATCC 700394 / DSM 18823 / ISDg</strain>
    </source>
</reference>
<gene>
    <name evidence="1" type="primary">pth</name>
    <name type="ordered locus">Cphy_0111</name>
</gene>
<dbReference type="EC" id="3.1.1.29" evidence="1"/>
<dbReference type="EMBL" id="CP000885">
    <property type="protein sequence ID" value="ABX40500.1"/>
    <property type="molecule type" value="Genomic_DNA"/>
</dbReference>
<dbReference type="RefSeq" id="WP_012198143.1">
    <property type="nucleotide sequence ID" value="NC_010001.1"/>
</dbReference>
<dbReference type="SMR" id="A9KR32"/>
<dbReference type="STRING" id="357809.Cphy_0111"/>
<dbReference type="KEGG" id="cpy:Cphy_0111"/>
<dbReference type="eggNOG" id="COG0193">
    <property type="taxonomic scope" value="Bacteria"/>
</dbReference>
<dbReference type="HOGENOM" id="CLU_062456_4_1_9"/>
<dbReference type="OrthoDB" id="9800507at2"/>
<dbReference type="Proteomes" id="UP000000370">
    <property type="component" value="Chromosome"/>
</dbReference>
<dbReference type="GO" id="GO:0005737">
    <property type="term" value="C:cytoplasm"/>
    <property type="evidence" value="ECO:0007669"/>
    <property type="project" value="UniProtKB-SubCell"/>
</dbReference>
<dbReference type="GO" id="GO:0004045">
    <property type="term" value="F:peptidyl-tRNA hydrolase activity"/>
    <property type="evidence" value="ECO:0007669"/>
    <property type="project" value="UniProtKB-UniRule"/>
</dbReference>
<dbReference type="GO" id="GO:0000049">
    <property type="term" value="F:tRNA binding"/>
    <property type="evidence" value="ECO:0007669"/>
    <property type="project" value="UniProtKB-UniRule"/>
</dbReference>
<dbReference type="GO" id="GO:0006515">
    <property type="term" value="P:protein quality control for misfolded or incompletely synthesized proteins"/>
    <property type="evidence" value="ECO:0007669"/>
    <property type="project" value="UniProtKB-UniRule"/>
</dbReference>
<dbReference type="GO" id="GO:0072344">
    <property type="term" value="P:rescue of stalled ribosome"/>
    <property type="evidence" value="ECO:0007669"/>
    <property type="project" value="UniProtKB-UniRule"/>
</dbReference>
<dbReference type="CDD" id="cd00462">
    <property type="entry name" value="PTH"/>
    <property type="match status" value="1"/>
</dbReference>
<dbReference type="FunFam" id="3.40.50.1470:FF:000001">
    <property type="entry name" value="Peptidyl-tRNA hydrolase"/>
    <property type="match status" value="1"/>
</dbReference>
<dbReference type="Gene3D" id="3.40.50.1470">
    <property type="entry name" value="Peptidyl-tRNA hydrolase"/>
    <property type="match status" value="1"/>
</dbReference>
<dbReference type="HAMAP" id="MF_00083">
    <property type="entry name" value="Pept_tRNA_hydro_bact"/>
    <property type="match status" value="1"/>
</dbReference>
<dbReference type="InterPro" id="IPR001328">
    <property type="entry name" value="Pept_tRNA_hydro"/>
</dbReference>
<dbReference type="InterPro" id="IPR018171">
    <property type="entry name" value="Pept_tRNA_hydro_CS"/>
</dbReference>
<dbReference type="InterPro" id="IPR036416">
    <property type="entry name" value="Pept_tRNA_hydro_sf"/>
</dbReference>
<dbReference type="NCBIfam" id="TIGR00447">
    <property type="entry name" value="pth"/>
    <property type="match status" value="1"/>
</dbReference>
<dbReference type="PANTHER" id="PTHR17224">
    <property type="entry name" value="PEPTIDYL-TRNA HYDROLASE"/>
    <property type="match status" value="1"/>
</dbReference>
<dbReference type="PANTHER" id="PTHR17224:SF1">
    <property type="entry name" value="PEPTIDYL-TRNA HYDROLASE"/>
    <property type="match status" value="1"/>
</dbReference>
<dbReference type="Pfam" id="PF01195">
    <property type="entry name" value="Pept_tRNA_hydro"/>
    <property type="match status" value="1"/>
</dbReference>
<dbReference type="SUPFAM" id="SSF53178">
    <property type="entry name" value="Peptidyl-tRNA hydrolase-like"/>
    <property type="match status" value="1"/>
</dbReference>
<dbReference type="PROSITE" id="PS01196">
    <property type="entry name" value="PEPT_TRNA_HYDROL_2"/>
    <property type="match status" value="1"/>
</dbReference>
<sequence>MYIIIGLGNPTREYEATRHNIGFDAITRLADDNNISLDTKKHKAICGKGMIGGEKVILAKPQTYMNLSGESVRELIDFYKVTKEEIIVIYDDISLDVGQLRIRTKGSAGGHNGIKNIIAHLGSDEFCRIKIGVGDKPKNWDLADYVLARFPKEEEPAIREALEKVSKACETILRDGAKVAMNLFNKKEINT</sequence>
<comment type="function">
    <text evidence="1">Hydrolyzes ribosome-free peptidyl-tRNAs (with 1 or more amino acids incorporated), which drop off the ribosome during protein synthesis, or as a result of ribosome stalling.</text>
</comment>
<comment type="function">
    <text evidence="1">Catalyzes the release of premature peptidyl moieties from peptidyl-tRNA molecules trapped in stalled 50S ribosomal subunits, and thus maintains levels of free tRNAs and 50S ribosomes.</text>
</comment>
<comment type="catalytic activity">
    <reaction evidence="1">
        <text>an N-acyl-L-alpha-aminoacyl-tRNA + H2O = an N-acyl-L-amino acid + a tRNA + H(+)</text>
        <dbReference type="Rhea" id="RHEA:54448"/>
        <dbReference type="Rhea" id="RHEA-COMP:10123"/>
        <dbReference type="Rhea" id="RHEA-COMP:13883"/>
        <dbReference type="ChEBI" id="CHEBI:15377"/>
        <dbReference type="ChEBI" id="CHEBI:15378"/>
        <dbReference type="ChEBI" id="CHEBI:59874"/>
        <dbReference type="ChEBI" id="CHEBI:78442"/>
        <dbReference type="ChEBI" id="CHEBI:138191"/>
        <dbReference type="EC" id="3.1.1.29"/>
    </reaction>
</comment>
<comment type="subunit">
    <text evidence="1">Monomer.</text>
</comment>
<comment type="subcellular location">
    <subcellularLocation>
        <location evidence="1">Cytoplasm</location>
    </subcellularLocation>
</comment>
<comment type="similarity">
    <text evidence="1">Belongs to the PTH family.</text>
</comment>
<feature type="chain" id="PRO_1000075335" description="Peptidyl-tRNA hydrolase">
    <location>
        <begin position="1"/>
        <end position="191"/>
    </location>
</feature>
<feature type="active site" description="Proton acceptor" evidence="1">
    <location>
        <position position="19"/>
    </location>
</feature>
<feature type="binding site" evidence="1">
    <location>
        <position position="14"/>
    </location>
    <ligand>
        <name>tRNA</name>
        <dbReference type="ChEBI" id="CHEBI:17843"/>
    </ligand>
</feature>
<feature type="binding site" evidence="1">
    <location>
        <position position="64"/>
    </location>
    <ligand>
        <name>tRNA</name>
        <dbReference type="ChEBI" id="CHEBI:17843"/>
    </ligand>
</feature>
<feature type="binding site" evidence="1">
    <location>
        <position position="66"/>
    </location>
    <ligand>
        <name>tRNA</name>
        <dbReference type="ChEBI" id="CHEBI:17843"/>
    </ligand>
</feature>
<feature type="binding site" evidence="1">
    <location>
        <position position="112"/>
    </location>
    <ligand>
        <name>tRNA</name>
        <dbReference type="ChEBI" id="CHEBI:17843"/>
    </ligand>
</feature>
<feature type="site" description="Discriminates between blocked and unblocked aminoacyl-tRNA" evidence="1">
    <location>
        <position position="9"/>
    </location>
</feature>
<feature type="site" description="Stabilizes the basic form of H active site to accept a proton" evidence="1">
    <location>
        <position position="91"/>
    </location>
</feature>
<keyword id="KW-0963">Cytoplasm</keyword>
<keyword id="KW-0378">Hydrolase</keyword>
<keyword id="KW-1185">Reference proteome</keyword>
<keyword id="KW-0694">RNA-binding</keyword>
<keyword id="KW-0820">tRNA-binding</keyword>
<proteinExistence type="inferred from homology"/>
<protein>
    <recommendedName>
        <fullName evidence="1">Peptidyl-tRNA hydrolase</fullName>
        <shortName evidence="1">Pth</shortName>
        <ecNumber evidence="1">3.1.1.29</ecNumber>
    </recommendedName>
</protein>
<accession>A9KR32</accession>
<name>PTH_LACP7</name>
<organism>
    <name type="scientific">Lachnoclostridium phytofermentans (strain ATCC 700394 / DSM 18823 / ISDg)</name>
    <name type="common">Clostridium phytofermentans</name>
    <dbReference type="NCBI Taxonomy" id="357809"/>
    <lineage>
        <taxon>Bacteria</taxon>
        <taxon>Bacillati</taxon>
        <taxon>Bacillota</taxon>
        <taxon>Clostridia</taxon>
        <taxon>Lachnospirales</taxon>
        <taxon>Lachnospiraceae</taxon>
    </lineage>
</organism>
<evidence type="ECO:0000255" key="1">
    <source>
        <dbReference type="HAMAP-Rule" id="MF_00083"/>
    </source>
</evidence>